<keyword id="KW-0997">Cell inner membrane</keyword>
<keyword id="KW-1003">Cell membrane</keyword>
<keyword id="KW-0472">Membrane</keyword>
<keyword id="KW-1185">Reference proteome</keyword>
<keyword id="KW-0808">Transferase</keyword>
<keyword id="KW-0812">Transmembrane</keyword>
<keyword id="KW-1133">Transmembrane helix</keyword>
<gene>
    <name evidence="1" type="primary">lgt</name>
    <name type="ordered locus">CCNA_00525</name>
</gene>
<sequence>MIFPNIDPVVHIGPWALQFGPLALRWYALAYVAGILLGWRYALRLTRTASVWGARTPTATALQIDDLVLWITLGIIVGGRLGYFVFYMLMNDDQRAWLAAHPMDVFKIWEGGMSFHGGFLGVCAAIILFARQQKIDMLRLGDLIAPVAPIGIFFGRIANFINGELWGRVTDGPFGIIFCNETIQANHPQRICPAGPLPRHPSQLYEAALEGLVLFLILAFAIYRLKWLRRRGALVATFLLGYGLARLALENVRNPDVGMPEFPLGLTMGMMLSIPMILAGGWLLWKSLKEPIRDDAEAHEPA</sequence>
<dbReference type="EC" id="2.5.1.145" evidence="1"/>
<dbReference type="EMBL" id="CP001340">
    <property type="protein sequence ID" value="ACL93990.1"/>
    <property type="molecule type" value="Genomic_DNA"/>
</dbReference>
<dbReference type="RefSeq" id="WP_010918380.1">
    <property type="nucleotide sequence ID" value="NC_011916.1"/>
</dbReference>
<dbReference type="RefSeq" id="YP_002515898.1">
    <property type="nucleotide sequence ID" value="NC_011916.1"/>
</dbReference>
<dbReference type="SMR" id="B8GZV6"/>
<dbReference type="GeneID" id="7332215"/>
<dbReference type="KEGG" id="ccs:CCNA_00525"/>
<dbReference type="PATRIC" id="fig|565050.3.peg.517"/>
<dbReference type="HOGENOM" id="CLU_013386_1_0_5"/>
<dbReference type="OrthoDB" id="871140at2"/>
<dbReference type="PhylomeDB" id="B8GZV6"/>
<dbReference type="UniPathway" id="UPA00664"/>
<dbReference type="Proteomes" id="UP000001364">
    <property type="component" value="Chromosome"/>
</dbReference>
<dbReference type="GO" id="GO:0005886">
    <property type="term" value="C:plasma membrane"/>
    <property type="evidence" value="ECO:0007669"/>
    <property type="project" value="UniProtKB-SubCell"/>
</dbReference>
<dbReference type="GO" id="GO:0008961">
    <property type="term" value="F:phosphatidylglycerol-prolipoprotein diacylglyceryl transferase activity"/>
    <property type="evidence" value="ECO:0007669"/>
    <property type="project" value="UniProtKB-UniRule"/>
</dbReference>
<dbReference type="GO" id="GO:0042158">
    <property type="term" value="P:lipoprotein biosynthetic process"/>
    <property type="evidence" value="ECO:0007669"/>
    <property type="project" value="UniProtKB-UniRule"/>
</dbReference>
<dbReference type="HAMAP" id="MF_01147">
    <property type="entry name" value="Lgt"/>
    <property type="match status" value="1"/>
</dbReference>
<dbReference type="InterPro" id="IPR001640">
    <property type="entry name" value="Lgt"/>
</dbReference>
<dbReference type="NCBIfam" id="TIGR00544">
    <property type="entry name" value="lgt"/>
    <property type="match status" value="1"/>
</dbReference>
<dbReference type="PANTHER" id="PTHR30589:SF0">
    <property type="entry name" value="PHOSPHATIDYLGLYCEROL--PROLIPOPROTEIN DIACYLGLYCERYL TRANSFERASE"/>
    <property type="match status" value="1"/>
</dbReference>
<dbReference type="PANTHER" id="PTHR30589">
    <property type="entry name" value="PROLIPOPROTEIN DIACYLGLYCERYL TRANSFERASE"/>
    <property type="match status" value="1"/>
</dbReference>
<dbReference type="Pfam" id="PF01790">
    <property type="entry name" value="LGT"/>
    <property type="match status" value="1"/>
</dbReference>
<dbReference type="PROSITE" id="PS01311">
    <property type="entry name" value="LGT"/>
    <property type="match status" value="1"/>
</dbReference>
<proteinExistence type="inferred from homology"/>
<evidence type="ECO:0000255" key="1">
    <source>
        <dbReference type="HAMAP-Rule" id="MF_01147"/>
    </source>
</evidence>
<feature type="chain" id="PRO_1000164131" description="Phosphatidylglycerol--prolipoprotein diacylglyceryl transferase">
    <location>
        <begin position="1"/>
        <end position="302"/>
    </location>
</feature>
<feature type="transmembrane region" description="Helical" evidence="1">
    <location>
        <begin position="19"/>
        <end position="39"/>
    </location>
</feature>
<feature type="transmembrane region" description="Helical" evidence="1">
    <location>
        <begin position="67"/>
        <end position="87"/>
    </location>
</feature>
<feature type="transmembrane region" description="Helical" evidence="1">
    <location>
        <begin position="108"/>
        <end position="128"/>
    </location>
</feature>
<feature type="transmembrane region" description="Helical" evidence="1">
    <location>
        <begin position="143"/>
        <end position="163"/>
    </location>
</feature>
<feature type="transmembrane region" description="Helical" evidence="1">
    <location>
        <begin position="203"/>
        <end position="223"/>
    </location>
</feature>
<feature type="transmembrane region" description="Helical" evidence="1">
    <location>
        <begin position="232"/>
        <end position="252"/>
    </location>
</feature>
<feature type="transmembrane region" description="Helical" evidence="1">
    <location>
        <begin position="264"/>
        <end position="284"/>
    </location>
</feature>
<feature type="binding site" evidence="1">
    <location>
        <position position="156"/>
    </location>
    <ligand>
        <name>a 1,2-diacyl-sn-glycero-3-phospho-(1'-sn-glycerol)</name>
        <dbReference type="ChEBI" id="CHEBI:64716"/>
    </ligand>
</feature>
<comment type="function">
    <text evidence="1">Catalyzes the transfer of the diacylglyceryl group from phosphatidylglycerol to the sulfhydryl group of the N-terminal cysteine of a prolipoprotein, the first step in the formation of mature lipoproteins.</text>
</comment>
<comment type="catalytic activity">
    <reaction evidence="1">
        <text>L-cysteinyl-[prolipoprotein] + a 1,2-diacyl-sn-glycero-3-phospho-(1'-sn-glycerol) = an S-1,2-diacyl-sn-glyceryl-L-cysteinyl-[prolipoprotein] + sn-glycerol 1-phosphate + H(+)</text>
        <dbReference type="Rhea" id="RHEA:56712"/>
        <dbReference type="Rhea" id="RHEA-COMP:14679"/>
        <dbReference type="Rhea" id="RHEA-COMP:14680"/>
        <dbReference type="ChEBI" id="CHEBI:15378"/>
        <dbReference type="ChEBI" id="CHEBI:29950"/>
        <dbReference type="ChEBI" id="CHEBI:57685"/>
        <dbReference type="ChEBI" id="CHEBI:64716"/>
        <dbReference type="ChEBI" id="CHEBI:140658"/>
        <dbReference type="EC" id="2.5.1.145"/>
    </reaction>
</comment>
<comment type="pathway">
    <text evidence="1">Protein modification; lipoprotein biosynthesis (diacylglyceryl transfer).</text>
</comment>
<comment type="subcellular location">
    <subcellularLocation>
        <location evidence="1">Cell inner membrane</location>
        <topology evidence="1">Multi-pass membrane protein</topology>
    </subcellularLocation>
</comment>
<comment type="similarity">
    <text evidence="1">Belongs to the Lgt family.</text>
</comment>
<accession>B8GZV6</accession>
<organism>
    <name type="scientific">Caulobacter vibrioides (strain NA1000 / CB15N)</name>
    <name type="common">Caulobacter crescentus</name>
    <dbReference type="NCBI Taxonomy" id="565050"/>
    <lineage>
        <taxon>Bacteria</taxon>
        <taxon>Pseudomonadati</taxon>
        <taxon>Pseudomonadota</taxon>
        <taxon>Alphaproteobacteria</taxon>
        <taxon>Caulobacterales</taxon>
        <taxon>Caulobacteraceae</taxon>
        <taxon>Caulobacter</taxon>
    </lineage>
</organism>
<name>LGT_CAUVN</name>
<reference key="1">
    <citation type="journal article" date="2010" name="J. Bacteriol.">
        <title>The genetic basis of laboratory adaptation in Caulobacter crescentus.</title>
        <authorList>
            <person name="Marks M.E."/>
            <person name="Castro-Rojas C.M."/>
            <person name="Teiling C."/>
            <person name="Du L."/>
            <person name="Kapatral V."/>
            <person name="Walunas T.L."/>
            <person name="Crosson S."/>
        </authorList>
    </citation>
    <scope>NUCLEOTIDE SEQUENCE [LARGE SCALE GENOMIC DNA]</scope>
    <source>
        <strain>NA1000 / CB15N</strain>
    </source>
</reference>
<protein>
    <recommendedName>
        <fullName evidence="1">Phosphatidylglycerol--prolipoprotein diacylglyceryl transferase</fullName>
        <ecNumber evidence="1">2.5.1.145</ecNumber>
    </recommendedName>
</protein>